<protein>
    <recommendedName>
        <fullName>UPF0725 protein At4g29550</fullName>
    </recommendedName>
</protein>
<dbReference type="EMBL" id="AL079344">
    <property type="protein sequence ID" value="CAB45315.1"/>
    <property type="status" value="ALT_SEQ"/>
    <property type="molecule type" value="Genomic_DNA"/>
</dbReference>
<dbReference type="EMBL" id="AL161575">
    <property type="protein sequence ID" value="CAB79713.1"/>
    <property type="status" value="ALT_SEQ"/>
    <property type="molecule type" value="Genomic_DNA"/>
</dbReference>
<dbReference type="EMBL" id="CP002687">
    <property type="protein sequence ID" value="AEE85644.1"/>
    <property type="molecule type" value="Genomic_DNA"/>
</dbReference>
<dbReference type="EMBL" id="CP002687">
    <property type="protein sequence ID" value="ANM66255.1"/>
    <property type="molecule type" value="Genomic_DNA"/>
</dbReference>
<dbReference type="EMBL" id="DQ446881">
    <property type="protein sequence ID" value="ABE66100.1"/>
    <property type="molecule type" value="mRNA"/>
</dbReference>
<dbReference type="EMBL" id="AY084630">
    <property type="protein sequence ID" value="AAM61193.1"/>
    <property type="molecule type" value="mRNA"/>
</dbReference>
<dbReference type="PIR" id="T09918">
    <property type="entry name" value="T09918"/>
</dbReference>
<dbReference type="RefSeq" id="NP_001328164.1">
    <property type="nucleotide sequence ID" value="NM_001341972.1"/>
</dbReference>
<dbReference type="RefSeq" id="NP_567829.1">
    <property type="nucleotide sequence ID" value="NM_119100.1"/>
</dbReference>
<dbReference type="SMR" id="Q8LFV1"/>
<dbReference type="PaxDb" id="3702-AT4G29550.1"/>
<dbReference type="ProteomicsDB" id="242901"/>
<dbReference type="EnsemblPlants" id="AT4G29550.1">
    <property type="protein sequence ID" value="AT4G29550.1"/>
    <property type="gene ID" value="AT4G29550"/>
</dbReference>
<dbReference type="EnsemblPlants" id="AT4G29550.2">
    <property type="protein sequence ID" value="AT4G29550.2"/>
    <property type="gene ID" value="AT4G29550"/>
</dbReference>
<dbReference type="GeneID" id="829076"/>
<dbReference type="Gramene" id="AT4G29550.1">
    <property type="protein sequence ID" value="AT4G29550.1"/>
    <property type="gene ID" value="AT4G29550"/>
</dbReference>
<dbReference type="Gramene" id="AT4G29550.2">
    <property type="protein sequence ID" value="AT4G29550.2"/>
    <property type="gene ID" value="AT4G29550"/>
</dbReference>
<dbReference type="KEGG" id="ath:AT4G29550"/>
<dbReference type="Araport" id="AT4G29550"/>
<dbReference type="TAIR" id="AT4G29550"/>
<dbReference type="HOGENOM" id="CLU_053767_2_1_1"/>
<dbReference type="InParanoid" id="Q8LFV1"/>
<dbReference type="PhylomeDB" id="Q8LFV1"/>
<dbReference type="PRO" id="PR:Q8LFV1"/>
<dbReference type="Proteomes" id="UP000006548">
    <property type="component" value="Chromosome 4"/>
</dbReference>
<dbReference type="ExpressionAtlas" id="Q8LFV1">
    <property type="expression patterns" value="baseline and differential"/>
</dbReference>
<dbReference type="InterPro" id="IPR006462">
    <property type="entry name" value="MS5"/>
</dbReference>
<dbReference type="NCBIfam" id="TIGR01572">
    <property type="entry name" value="A_thl_para_3677"/>
    <property type="match status" value="1"/>
</dbReference>
<dbReference type="PANTHER" id="PTHR31260:SF28">
    <property type="entry name" value="CYSTATIN DOMAIN PROTEIN"/>
    <property type="match status" value="1"/>
</dbReference>
<dbReference type="PANTHER" id="PTHR31260">
    <property type="entry name" value="CYSTATIN/MONELLIN SUPERFAMILY PROTEIN"/>
    <property type="match status" value="1"/>
</dbReference>
<dbReference type="Pfam" id="PF04776">
    <property type="entry name" value="protein_MS5"/>
    <property type="match status" value="1"/>
</dbReference>
<organism>
    <name type="scientific">Arabidopsis thaliana</name>
    <name type="common">Mouse-ear cress</name>
    <dbReference type="NCBI Taxonomy" id="3702"/>
    <lineage>
        <taxon>Eukaryota</taxon>
        <taxon>Viridiplantae</taxon>
        <taxon>Streptophyta</taxon>
        <taxon>Embryophyta</taxon>
        <taxon>Tracheophyta</taxon>
        <taxon>Spermatophyta</taxon>
        <taxon>Magnoliopsida</taxon>
        <taxon>eudicotyledons</taxon>
        <taxon>Gunneridae</taxon>
        <taxon>Pentapetalae</taxon>
        <taxon>rosids</taxon>
        <taxon>malvids</taxon>
        <taxon>Brassicales</taxon>
        <taxon>Brassicaceae</taxon>
        <taxon>Camelineae</taxon>
        <taxon>Arabidopsis</taxon>
    </lineage>
</organism>
<feature type="chain" id="PRO_0000363122" description="UPF0725 protein At4g29550">
    <location>
        <begin position="1"/>
        <end position="358"/>
    </location>
</feature>
<feature type="region of interest" description="Disordered" evidence="1">
    <location>
        <begin position="31"/>
        <end position="82"/>
    </location>
</feature>
<feature type="compositionally biased region" description="Basic and acidic residues" evidence="1">
    <location>
        <begin position="58"/>
        <end position="67"/>
    </location>
</feature>
<gene>
    <name type="ordered locus">At4g29550</name>
    <name type="ORF">T16L4.60</name>
</gene>
<reference key="1">
    <citation type="journal article" date="1999" name="Nature">
        <title>Sequence and analysis of chromosome 4 of the plant Arabidopsis thaliana.</title>
        <authorList>
            <person name="Mayer K.F.X."/>
            <person name="Schueller C."/>
            <person name="Wambutt R."/>
            <person name="Murphy G."/>
            <person name="Volckaert G."/>
            <person name="Pohl T."/>
            <person name="Duesterhoeft A."/>
            <person name="Stiekema W."/>
            <person name="Entian K.-D."/>
            <person name="Terryn N."/>
            <person name="Harris B."/>
            <person name="Ansorge W."/>
            <person name="Brandt P."/>
            <person name="Grivell L.A."/>
            <person name="Rieger M."/>
            <person name="Weichselgartner M."/>
            <person name="de Simone V."/>
            <person name="Obermaier B."/>
            <person name="Mache R."/>
            <person name="Mueller M."/>
            <person name="Kreis M."/>
            <person name="Delseny M."/>
            <person name="Puigdomenech P."/>
            <person name="Watson M."/>
            <person name="Schmidtheini T."/>
            <person name="Reichert B."/>
            <person name="Portetelle D."/>
            <person name="Perez-Alonso M."/>
            <person name="Boutry M."/>
            <person name="Bancroft I."/>
            <person name="Vos P."/>
            <person name="Hoheisel J."/>
            <person name="Zimmermann W."/>
            <person name="Wedler H."/>
            <person name="Ridley P."/>
            <person name="Langham S.-A."/>
            <person name="McCullagh B."/>
            <person name="Bilham L."/>
            <person name="Robben J."/>
            <person name="van der Schueren J."/>
            <person name="Grymonprez B."/>
            <person name="Chuang Y.-J."/>
            <person name="Vandenbussche F."/>
            <person name="Braeken M."/>
            <person name="Weltjens I."/>
            <person name="Voet M."/>
            <person name="Bastiaens I."/>
            <person name="Aert R."/>
            <person name="Defoor E."/>
            <person name="Weitzenegger T."/>
            <person name="Bothe G."/>
            <person name="Ramsperger U."/>
            <person name="Hilbert H."/>
            <person name="Braun M."/>
            <person name="Holzer E."/>
            <person name="Brandt A."/>
            <person name="Peters S."/>
            <person name="van Staveren M."/>
            <person name="Dirkse W."/>
            <person name="Mooijman P."/>
            <person name="Klein Lankhorst R."/>
            <person name="Rose M."/>
            <person name="Hauf J."/>
            <person name="Koetter P."/>
            <person name="Berneiser S."/>
            <person name="Hempel S."/>
            <person name="Feldpausch M."/>
            <person name="Lamberth S."/>
            <person name="Van den Daele H."/>
            <person name="De Keyser A."/>
            <person name="Buysshaert C."/>
            <person name="Gielen J."/>
            <person name="Villarroel R."/>
            <person name="De Clercq R."/>
            <person name="van Montagu M."/>
            <person name="Rogers J."/>
            <person name="Cronin A."/>
            <person name="Quail M.A."/>
            <person name="Bray-Allen S."/>
            <person name="Clark L."/>
            <person name="Doggett J."/>
            <person name="Hall S."/>
            <person name="Kay M."/>
            <person name="Lennard N."/>
            <person name="McLay K."/>
            <person name="Mayes R."/>
            <person name="Pettett A."/>
            <person name="Rajandream M.A."/>
            <person name="Lyne M."/>
            <person name="Benes V."/>
            <person name="Rechmann S."/>
            <person name="Borkova D."/>
            <person name="Bloecker H."/>
            <person name="Scharfe M."/>
            <person name="Grimm M."/>
            <person name="Loehnert T.-H."/>
            <person name="Dose S."/>
            <person name="de Haan M."/>
            <person name="Maarse A.C."/>
            <person name="Schaefer M."/>
            <person name="Mueller-Auer S."/>
            <person name="Gabel C."/>
            <person name="Fuchs M."/>
            <person name="Fartmann B."/>
            <person name="Granderath K."/>
            <person name="Dauner D."/>
            <person name="Herzl A."/>
            <person name="Neumann S."/>
            <person name="Argiriou A."/>
            <person name="Vitale D."/>
            <person name="Liguori R."/>
            <person name="Piravandi E."/>
            <person name="Massenet O."/>
            <person name="Quigley F."/>
            <person name="Clabauld G."/>
            <person name="Muendlein A."/>
            <person name="Felber R."/>
            <person name="Schnabl S."/>
            <person name="Hiller R."/>
            <person name="Schmidt W."/>
            <person name="Lecharny A."/>
            <person name="Aubourg S."/>
            <person name="Chefdor F."/>
            <person name="Cooke R."/>
            <person name="Berger C."/>
            <person name="Monfort A."/>
            <person name="Casacuberta E."/>
            <person name="Gibbons T."/>
            <person name="Weber N."/>
            <person name="Vandenbol M."/>
            <person name="Bargues M."/>
            <person name="Terol J."/>
            <person name="Torres A."/>
            <person name="Perez-Perez A."/>
            <person name="Purnelle B."/>
            <person name="Bent E."/>
            <person name="Johnson S."/>
            <person name="Tacon D."/>
            <person name="Jesse T."/>
            <person name="Heijnen L."/>
            <person name="Schwarz S."/>
            <person name="Scholler P."/>
            <person name="Heber S."/>
            <person name="Francs P."/>
            <person name="Bielke C."/>
            <person name="Frishman D."/>
            <person name="Haase D."/>
            <person name="Lemcke K."/>
            <person name="Mewes H.-W."/>
            <person name="Stocker S."/>
            <person name="Zaccaria P."/>
            <person name="Bevan M."/>
            <person name="Wilson R.K."/>
            <person name="de la Bastide M."/>
            <person name="Habermann K."/>
            <person name="Parnell L."/>
            <person name="Dedhia N."/>
            <person name="Gnoj L."/>
            <person name="Schutz K."/>
            <person name="Huang E."/>
            <person name="Spiegel L."/>
            <person name="Sekhon M."/>
            <person name="Murray J."/>
            <person name="Sheet P."/>
            <person name="Cordes M."/>
            <person name="Abu-Threideh J."/>
            <person name="Stoneking T."/>
            <person name="Kalicki J."/>
            <person name="Graves T."/>
            <person name="Harmon G."/>
            <person name="Edwards J."/>
            <person name="Latreille P."/>
            <person name="Courtney L."/>
            <person name="Cloud J."/>
            <person name="Abbott A."/>
            <person name="Scott K."/>
            <person name="Johnson D."/>
            <person name="Minx P."/>
            <person name="Bentley D."/>
            <person name="Fulton B."/>
            <person name="Miller N."/>
            <person name="Greco T."/>
            <person name="Kemp K."/>
            <person name="Kramer J."/>
            <person name="Fulton L."/>
            <person name="Mardis E."/>
            <person name="Dante M."/>
            <person name="Pepin K."/>
            <person name="Hillier L.W."/>
            <person name="Nelson J."/>
            <person name="Spieth J."/>
            <person name="Ryan E."/>
            <person name="Andrews S."/>
            <person name="Geisel C."/>
            <person name="Layman D."/>
            <person name="Du H."/>
            <person name="Ali J."/>
            <person name="Berghoff A."/>
            <person name="Jones K."/>
            <person name="Drone K."/>
            <person name="Cotton M."/>
            <person name="Joshu C."/>
            <person name="Antonoiu B."/>
            <person name="Zidanic M."/>
            <person name="Strong C."/>
            <person name="Sun H."/>
            <person name="Lamar B."/>
            <person name="Yordan C."/>
            <person name="Ma P."/>
            <person name="Zhong J."/>
            <person name="Preston R."/>
            <person name="Vil D."/>
            <person name="Shekher M."/>
            <person name="Matero A."/>
            <person name="Shah R."/>
            <person name="Swaby I.K."/>
            <person name="O'Shaughnessy A."/>
            <person name="Rodriguez M."/>
            <person name="Hoffman J."/>
            <person name="Till S."/>
            <person name="Granat S."/>
            <person name="Shohdy N."/>
            <person name="Hasegawa A."/>
            <person name="Hameed A."/>
            <person name="Lodhi M."/>
            <person name="Johnson A."/>
            <person name="Chen E."/>
            <person name="Marra M.A."/>
            <person name="Martienssen R."/>
            <person name="McCombie W.R."/>
        </authorList>
    </citation>
    <scope>NUCLEOTIDE SEQUENCE [LARGE SCALE GENOMIC DNA]</scope>
    <source>
        <strain>cv. Columbia</strain>
    </source>
</reference>
<reference key="2">
    <citation type="journal article" date="2017" name="Plant J.">
        <title>Araport11: a complete reannotation of the Arabidopsis thaliana reference genome.</title>
        <authorList>
            <person name="Cheng C.Y."/>
            <person name="Krishnakumar V."/>
            <person name="Chan A.P."/>
            <person name="Thibaud-Nissen F."/>
            <person name="Schobel S."/>
            <person name="Town C.D."/>
        </authorList>
    </citation>
    <scope>GENOME REANNOTATION</scope>
    <source>
        <strain>cv. Columbia</strain>
    </source>
</reference>
<reference key="3">
    <citation type="journal article" date="2006" name="Plant Biotechnol. J.">
        <title>Simultaneous high-throughput recombinational cloning of open reading frames in closed and open configurations.</title>
        <authorList>
            <person name="Underwood B.A."/>
            <person name="Vanderhaeghen R."/>
            <person name="Whitford R."/>
            <person name="Town C.D."/>
            <person name="Hilson P."/>
        </authorList>
    </citation>
    <scope>NUCLEOTIDE SEQUENCE [LARGE SCALE MRNA]</scope>
    <source>
        <strain>cv. Columbia</strain>
    </source>
</reference>
<reference key="4">
    <citation type="submission" date="2002-03" db="EMBL/GenBank/DDBJ databases">
        <title>Full-length cDNA from Arabidopsis thaliana.</title>
        <authorList>
            <person name="Brover V.V."/>
            <person name="Troukhan M.E."/>
            <person name="Alexandrov N.A."/>
            <person name="Lu Y.-P."/>
            <person name="Flavell R.B."/>
            <person name="Feldmann K.A."/>
        </authorList>
    </citation>
    <scope>NUCLEOTIDE SEQUENCE [LARGE SCALE MRNA]</scope>
</reference>
<evidence type="ECO:0000256" key="1">
    <source>
        <dbReference type="SAM" id="MobiDB-lite"/>
    </source>
</evidence>
<evidence type="ECO:0000305" key="2"/>
<proteinExistence type="evidence at transcript level"/>
<keyword id="KW-1185">Reference proteome</keyword>
<accession>Q8LFV1</accession>
<accession>Q9SU90</accession>
<comment type="similarity">
    <text evidence="2">Belongs to the UPF0725 (EMB2204) family.</text>
</comment>
<comment type="sequence caution" evidence="2">
    <conflict type="erroneous gene model prediction">
        <sequence resource="EMBL-CDS" id="CAB45315"/>
    </conflict>
</comment>
<comment type="sequence caution" evidence="2">
    <conflict type="erroneous gene model prediction">
        <sequence resource="EMBL-CDS" id="CAB79713"/>
    </conflict>
</comment>
<name>Y4295_ARATH</name>
<sequence length="358" mass="41186">MEAVDRPLRIEETTVSHDVSSCGFISKEEWLNKHPPSGSGWTDEDDDNDDVFSSSFISKEELSDAVHNDPPSGWTDEDDDDQVDPALEKEFYRQIRESDGFDVDIRIPTSSLYVYKCANNDDLRGDIVGICARVGLHWYNFQKGSNLELMHVDKYNSRFCALMTYNITAEAVDPANDSRFTFQTCVTRATCQKDEDLRILTEVCRIKPKIQGTGDEIKRWNDEAIDDIYKGNLPEWISDDTLMSCSEQDHFYRVQESDIREHNWLQLYTEIASYSLWEGDMRLKSCVPLQIKNVLVRTREDFKSKEKLKAGNAIFYISFRGVNTPHGPPQDHRAIVRRTVDGIPGHVCLEFKCLLMDL</sequence>